<dbReference type="EMBL" id="AY147589">
    <property type="protein sequence ID" value="AAN32457.1"/>
    <property type="molecule type" value="Genomic_DNA"/>
</dbReference>
<dbReference type="SMR" id="Q67H97"/>
<dbReference type="GO" id="GO:0009535">
    <property type="term" value="C:chloroplast thylakoid membrane"/>
    <property type="evidence" value="ECO:0007669"/>
    <property type="project" value="UniProtKB-SubCell"/>
</dbReference>
<dbReference type="GO" id="GO:0009539">
    <property type="term" value="C:photosystem II reaction center"/>
    <property type="evidence" value="ECO:0007669"/>
    <property type="project" value="InterPro"/>
</dbReference>
<dbReference type="GO" id="GO:0009055">
    <property type="term" value="F:electron transfer activity"/>
    <property type="evidence" value="ECO:0007669"/>
    <property type="project" value="UniProtKB-UniRule"/>
</dbReference>
<dbReference type="GO" id="GO:0020037">
    <property type="term" value="F:heme binding"/>
    <property type="evidence" value="ECO:0007669"/>
    <property type="project" value="InterPro"/>
</dbReference>
<dbReference type="GO" id="GO:0005506">
    <property type="term" value="F:iron ion binding"/>
    <property type="evidence" value="ECO:0007669"/>
    <property type="project" value="UniProtKB-UniRule"/>
</dbReference>
<dbReference type="GO" id="GO:0009767">
    <property type="term" value="P:photosynthetic electron transport chain"/>
    <property type="evidence" value="ECO:0007669"/>
    <property type="project" value="InterPro"/>
</dbReference>
<dbReference type="HAMAP" id="MF_00643">
    <property type="entry name" value="PSII_PsbF"/>
    <property type="match status" value="1"/>
</dbReference>
<dbReference type="InterPro" id="IPR006241">
    <property type="entry name" value="PSII_cyt_b559_bsu"/>
</dbReference>
<dbReference type="InterPro" id="IPR006216">
    <property type="entry name" value="PSII_cyt_b559_CS"/>
</dbReference>
<dbReference type="InterPro" id="IPR013081">
    <property type="entry name" value="PSII_cyt_b559_N"/>
</dbReference>
<dbReference type="NCBIfam" id="TIGR01333">
    <property type="entry name" value="cyt_b559_beta"/>
    <property type="match status" value="1"/>
</dbReference>
<dbReference type="Pfam" id="PF00283">
    <property type="entry name" value="Cytochrom_B559"/>
    <property type="match status" value="1"/>
</dbReference>
<dbReference type="PIRSF" id="PIRSF000037">
    <property type="entry name" value="PsbF"/>
    <property type="match status" value="1"/>
</dbReference>
<dbReference type="SUPFAM" id="SSF161045">
    <property type="entry name" value="Cytochrome b559 subunits"/>
    <property type="match status" value="1"/>
</dbReference>
<dbReference type="PROSITE" id="PS00537">
    <property type="entry name" value="CYTOCHROME_B559"/>
    <property type="match status" value="1"/>
</dbReference>
<comment type="function">
    <text evidence="1">This b-type cytochrome is tightly associated with the reaction center of photosystem II (PSII). PSII is a light-driven water:plastoquinone oxidoreductase that uses light energy to abstract electrons from H(2)O, generating O(2) and a proton gradient subsequently used for ATP formation. It consists of a core antenna complex that captures photons, and an electron transfer chain that converts photonic excitation into a charge separation.</text>
</comment>
<comment type="cofactor">
    <cofactor evidence="1">
        <name>heme b</name>
        <dbReference type="ChEBI" id="CHEBI:60344"/>
    </cofactor>
    <text evidence="1">With its partner (PsbE) binds heme. PSII binds additional chlorophylls, carotenoids and specific lipids.</text>
</comment>
<comment type="subunit">
    <text evidence="1">Heterodimer of an alpha subunit and a beta subunit. PSII is composed of 1 copy each of membrane proteins PsbA, PsbB, PsbC, PsbD, PsbE, PsbF, PsbH, PsbI, PsbJ, PsbK, PsbL, PsbM, PsbT, PsbX, PsbY, PsbZ, Psb30/Ycf12, at least 3 peripheral proteins of the oxygen-evolving complex and a large number of cofactors. It forms dimeric complexes.</text>
</comment>
<comment type="subcellular location">
    <subcellularLocation>
        <location evidence="1">Plastid</location>
        <location evidence="1">Chloroplast thylakoid membrane</location>
        <topology evidence="1">Single-pass membrane protein</topology>
    </subcellularLocation>
</comment>
<comment type="similarity">
    <text evidence="1">Belongs to the PsbE/PsbF family.</text>
</comment>
<name>PSBF_MUIMA</name>
<protein>
    <recommendedName>
        <fullName evidence="1">Cytochrome b559 subunit beta</fullName>
    </recommendedName>
    <alternativeName>
        <fullName evidence="1">PSII reaction center subunit VI</fullName>
    </alternativeName>
</protein>
<reference key="1">
    <citation type="submission" date="2002-09" db="EMBL/GenBank/DDBJ databases">
        <title>Phylogenetic relationships among the major lineages of Asparagales based on a large chloroplast data set.</title>
        <authorList>
            <person name="McPherson M.A."/>
            <person name="Rai H.S."/>
            <person name="Wong W.A."/>
            <person name="Graham S.W."/>
        </authorList>
    </citation>
    <scope>NUCLEOTIDE SEQUENCE [GENOMIC DNA]</scope>
</reference>
<feature type="chain" id="PRO_0000233644" description="Cytochrome b559 subunit beta">
    <location>
        <begin position="1"/>
        <end position="39"/>
    </location>
</feature>
<feature type="transmembrane region" description="Helical" evidence="1">
    <location>
        <begin position="14"/>
        <end position="30"/>
    </location>
</feature>
<feature type="binding site" description="axial binding residue" evidence="1">
    <location>
        <position position="18"/>
    </location>
    <ligand>
        <name>heme</name>
        <dbReference type="ChEBI" id="CHEBI:30413"/>
        <note>ligand shared with alpha subunit</note>
    </ligand>
    <ligandPart>
        <name>Fe</name>
        <dbReference type="ChEBI" id="CHEBI:18248"/>
    </ligandPart>
</feature>
<organism>
    <name type="scientific">Muilla maritima</name>
    <name type="common">Sea muilla</name>
    <name type="synonym">Hesperoscordum maritimum</name>
    <dbReference type="NCBI Taxonomy" id="51461"/>
    <lineage>
        <taxon>Eukaryota</taxon>
        <taxon>Viridiplantae</taxon>
        <taxon>Streptophyta</taxon>
        <taxon>Embryophyta</taxon>
        <taxon>Tracheophyta</taxon>
        <taxon>Spermatophyta</taxon>
        <taxon>Magnoliopsida</taxon>
        <taxon>Liliopsida</taxon>
        <taxon>Asparagales</taxon>
        <taxon>Asparagaceae</taxon>
        <taxon>Brodiaeoideae</taxon>
        <taxon>Muilla</taxon>
    </lineage>
</organism>
<sequence>MTIDRTYPIFTVRWLAVHGLAVPTVSFLGSISAMQFIQR</sequence>
<evidence type="ECO:0000255" key="1">
    <source>
        <dbReference type="HAMAP-Rule" id="MF_00643"/>
    </source>
</evidence>
<geneLocation type="chloroplast"/>
<gene>
    <name evidence="1" type="primary">psbF</name>
</gene>
<proteinExistence type="inferred from homology"/>
<accession>Q67H97</accession>
<keyword id="KW-0150">Chloroplast</keyword>
<keyword id="KW-0249">Electron transport</keyword>
<keyword id="KW-0349">Heme</keyword>
<keyword id="KW-0408">Iron</keyword>
<keyword id="KW-0472">Membrane</keyword>
<keyword id="KW-0479">Metal-binding</keyword>
<keyword id="KW-0602">Photosynthesis</keyword>
<keyword id="KW-0604">Photosystem II</keyword>
<keyword id="KW-0934">Plastid</keyword>
<keyword id="KW-0793">Thylakoid</keyword>
<keyword id="KW-0812">Transmembrane</keyword>
<keyword id="KW-1133">Transmembrane helix</keyword>
<keyword id="KW-0813">Transport</keyword>